<gene>
    <name evidence="1" type="primary">rpmI</name>
    <name type="ordered locus">Ldb1501</name>
</gene>
<sequence>MPKMKTHRASAKRFKRTGNGGLKRHHAFTGHRFHGKTKKQRRHLRKAAMVSRSDLKRIKQMLSQMR</sequence>
<accession>Q1G9B3</accession>
<dbReference type="EMBL" id="CR954253">
    <property type="protein sequence ID" value="CAI98301.1"/>
    <property type="molecule type" value="Genomic_DNA"/>
</dbReference>
<dbReference type="RefSeq" id="WP_002879235.1">
    <property type="nucleotide sequence ID" value="NZ_JQAV01000014.1"/>
</dbReference>
<dbReference type="SMR" id="Q1G9B3"/>
<dbReference type="STRING" id="390333.Ldb1501"/>
<dbReference type="GeneID" id="69669305"/>
<dbReference type="KEGG" id="ldb:Ldb1501"/>
<dbReference type="PATRIC" id="fig|390333.13.peg.719"/>
<dbReference type="eggNOG" id="COG0291">
    <property type="taxonomic scope" value="Bacteria"/>
</dbReference>
<dbReference type="HOGENOM" id="CLU_169643_3_1_9"/>
<dbReference type="BioCyc" id="LDEL390333:LDB_RS06465-MONOMER"/>
<dbReference type="Proteomes" id="UP000001259">
    <property type="component" value="Chromosome"/>
</dbReference>
<dbReference type="GO" id="GO:0022625">
    <property type="term" value="C:cytosolic large ribosomal subunit"/>
    <property type="evidence" value="ECO:0007669"/>
    <property type="project" value="TreeGrafter"/>
</dbReference>
<dbReference type="GO" id="GO:0003735">
    <property type="term" value="F:structural constituent of ribosome"/>
    <property type="evidence" value="ECO:0007669"/>
    <property type="project" value="InterPro"/>
</dbReference>
<dbReference type="GO" id="GO:0006412">
    <property type="term" value="P:translation"/>
    <property type="evidence" value="ECO:0007669"/>
    <property type="project" value="UniProtKB-UniRule"/>
</dbReference>
<dbReference type="FunFam" id="4.10.410.60:FF:000001">
    <property type="entry name" value="50S ribosomal protein L35"/>
    <property type="match status" value="1"/>
</dbReference>
<dbReference type="Gene3D" id="4.10.410.60">
    <property type="match status" value="1"/>
</dbReference>
<dbReference type="HAMAP" id="MF_00514">
    <property type="entry name" value="Ribosomal_bL35"/>
    <property type="match status" value="1"/>
</dbReference>
<dbReference type="InterPro" id="IPR001706">
    <property type="entry name" value="Ribosomal_bL35"/>
</dbReference>
<dbReference type="InterPro" id="IPR021137">
    <property type="entry name" value="Ribosomal_bL35-like"/>
</dbReference>
<dbReference type="InterPro" id="IPR018265">
    <property type="entry name" value="Ribosomal_bL35_CS"/>
</dbReference>
<dbReference type="InterPro" id="IPR037229">
    <property type="entry name" value="Ribosomal_bL35_sf"/>
</dbReference>
<dbReference type="NCBIfam" id="TIGR00001">
    <property type="entry name" value="rpmI_bact"/>
    <property type="match status" value="1"/>
</dbReference>
<dbReference type="PANTHER" id="PTHR33343">
    <property type="entry name" value="54S RIBOSOMAL PROTEIN BL35M"/>
    <property type="match status" value="1"/>
</dbReference>
<dbReference type="PANTHER" id="PTHR33343:SF1">
    <property type="entry name" value="LARGE RIBOSOMAL SUBUNIT PROTEIN BL35M"/>
    <property type="match status" value="1"/>
</dbReference>
<dbReference type="Pfam" id="PF01632">
    <property type="entry name" value="Ribosomal_L35p"/>
    <property type="match status" value="1"/>
</dbReference>
<dbReference type="PRINTS" id="PR00064">
    <property type="entry name" value="RIBOSOMALL35"/>
</dbReference>
<dbReference type="SUPFAM" id="SSF143034">
    <property type="entry name" value="L35p-like"/>
    <property type="match status" value="1"/>
</dbReference>
<dbReference type="PROSITE" id="PS00936">
    <property type="entry name" value="RIBOSOMAL_L35"/>
    <property type="match status" value="1"/>
</dbReference>
<reference key="1">
    <citation type="journal article" date="2006" name="Proc. Natl. Acad. Sci. U.S.A.">
        <title>The complete genome sequence of Lactobacillus bulgaricus reveals extensive and ongoing reductive evolution.</title>
        <authorList>
            <person name="van de Guchte M."/>
            <person name="Penaud S."/>
            <person name="Grimaldi C."/>
            <person name="Barbe V."/>
            <person name="Bryson K."/>
            <person name="Nicolas P."/>
            <person name="Robert C."/>
            <person name="Oztas S."/>
            <person name="Mangenot S."/>
            <person name="Couloux A."/>
            <person name="Loux V."/>
            <person name="Dervyn R."/>
            <person name="Bossy R."/>
            <person name="Bolotin A."/>
            <person name="Batto J.-M."/>
            <person name="Walunas T."/>
            <person name="Gibrat J.-F."/>
            <person name="Bessieres P."/>
            <person name="Weissenbach J."/>
            <person name="Ehrlich S.D."/>
            <person name="Maguin E."/>
        </authorList>
    </citation>
    <scope>NUCLEOTIDE SEQUENCE [LARGE SCALE GENOMIC DNA]</scope>
    <source>
        <strain>ATCC 11842 / DSM 20081 / BCRC 10696 / JCM 1002 / NBRC 13953 / NCIMB 11778 / NCTC 12712 / WDCM 00102 / Lb 14</strain>
    </source>
</reference>
<name>RL35_LACDA</name>
<protein>
    <recommendedName>
        <fullName evidence="1">Large ribosomal subunit protein bL35</fullName>
    </recommendedName>
    <alternativeName>
        <fullName evidence="3">50S ribosomal protein L35</fullName>
    </alternativeName>
</protein>
<evidence type="ECO:0000255" key="1">
    <source>
        <dbReference type="HAMAP-Rule" id="MF_00514"/>
    </source>
</evidence>
<evidence type="ECO:0000256" key="2">
    <source>
        <dbReference type="SAM" id="MobiDB-lite"/>
    </source>
</evidence>
<evidence type="ECO:0000305" key="3"/>
<feature type="chain" id="PRO_0000258692" description="Large ribosomal subunit protein bL35">
    <location>
        <begin position="1"/>
        <end position="66"/>
    </location>
</feature>
<feature type="region of interest" description="Disordered" evidence="2">
    <location>
        <begin position="1"/>
        <end position="50"/>
    </location>
</feature>
<feature type="compositionally biased region" description="Basic residues" evidence="2">
    <location>
        <begin position="1"/>
        <end position="46"/>
    </location>
</feature>
<organism>
    <name type="scientific">Lactobacillus delbrueckii subsp. bulgaricus (strain ATCC 11842 / DSM 20081 / BCRC 10696 / JCM 1002 / NBRC 13953 / NCIMB 11778 / NCTC 12712 / WDCM 00102 / Lb 14)</name>
    <dbReference type="NCBI Taxonomy" id="390333"/>
    <lineage>
        <taxon>Bacteria</taxon>
        <taxon>Bacillati</taxon>
        <taxon>Bacillota</taxon>
        <taxon>Bacilli</taxon>
        <taxon>Lactobacillales</taxon>
        <taxon>Lactobacillaceae</taxon>
        <taxon>Lactobacillus</taxon>
    </lineage>
</organism>
<keyword id="KW-1185">Reference proteome</keyword>
<keyword id="KW-0687">Ribonucleoprotein</keyword>
<keyword id="KW-0689">Ribosomal protein</keyword>
<comment type="similarity">
    <text evidence="1">Belongs to the bacterial ribosomal protein bL35 family.</text>
</comment>
<proteinExistence type="inferred from homology"/>